<gene>
    <name evidence="1" type="primary">rodZ</name>
    <name type="ordered locus">YpsIP31758_1185</name>
</gene>
<accession>A7FFY8</accession>
<organism>
    <name type="scientific">Yersinia pseudotuberculosis serotype O:1b (strain IP 31758)</name>
    <dbReference type="NCBI Taxonomy" id="349747"/>
    <lineage>
        <taxon>Bacteria</taxon>
        <taxon>Pseudomonadati</taxon>
        <taxon>Pseudomonadota</taxon>
        <taxon>Gammaproteobacteria</taxon>
        <taxon>Enterobacterales</taxon>
        <taxon>Yersiniaceae</taxon>
        <taxon>Yersinia</taxon>
    </lineage>
</organism>
<dbReference type="EMBL" id="CP000720">
    <property type="protein sequence ID" value="ABS49734.1"/>
    <property type="molecule type" value="Genomic_DNA"/>
</dbReference>
<dbReference type="RefSeq" id="WP_012104807.1">
    <property type="nucleotide sequence ID" value="NC_009708.1"/>
</dbReference>
<dbReference type="SMR" id="A7FFY8"/>
<dbReference type="KEGG" id="ypi:YpsIP31758_1185"/>
<dbReference type="HOGENOM" id="CLU_047530_3_1_6"/>
<dbReference type="Proteomes" id="UP000002412">
    <property type="component" value="Chromosome"/>
</dbReference>
<dbReference type="GO" id="GO:0005886">
    <property type="term" value="C:plasma membrane"/>
    <property type="evidence" value="ECO:0007669"/>
    <property type="project" value="UniProtKB-SubCell"/>
</dbReference>
<dbReference type="GO" id="GO:0003677">
    <property type="term" value="F:DNA binding"/>
    <property type="evidence" value="ECO:0007669"/>
    <property type="project" value="UniProtKB-KW"/>
</dbReference>
<dbReference type="GO" id="GO:0008360">
    <property type="term" value="P:regulation of cell shape"/>
    <property type="evidence" value="ECO:0007669"/>
    <property type="project" value="UniProtKB-UniRule"/>
</dbReference>
<dbReference type="CDD" id="cd00093">
    <property type="entry name" value="HTH_XRE"/>
    <property type="match status" value="1"/>
</dbReference>
<dbReference type="Gene3D" id="1.10.260.40">
    <property type="entry name" value="lambda repressor-like DNA-binding domains"/>
    <property type="match status" value="1"/>
</dbReference>
<dbReference type="HAMAP" id="MF_02017">
    <property type="entry name" value="RodZ"/>
    <property type="match status" value="1"/>
</dbReference>
<dbReference type="InterPro" id="IPR050400">
    <property type="entry name" value="Bact_Cytoskel_RodZ"/>
</dbReference>
<dbReference type="InterPro" id="IPR001387">
    <property type="entry name" value="Cro/C1-type_HTH"/>
</dbReference>
<dbReference type="InterPro" id="IPR010982">
    <property type="entry name" value="Lambda_DNA-bd_dom_sf"/>
</dbReference>
<dbReference type="InterPro" id="IPR023690">
    <property type="entry name" value="RodZ"/>
</dbReference>
<dbReference type="InterPro" id="IPR025194">
    <property type="entry name" value="RodZ-like_C"/>
</dbReference>
<dbReference type="NCBIfam" id="NF008109">
    <property type="entry name" value="PRK10856.1"/>
    <property type="match status" value="1"/>
</dbReference>
<dbReference type="PANTHER" id="PTHR34475">
    <property type="match status" value="1"/>
</dbReference>
<dbReference type="PANTHER" id="PTHR34475:SF1">
    <property type="entry name" value="CYTOSKELETON PROTEIN RODZ"/>
    <property type="match status" value="1"/>
</dbReference>
<dbReference type="Pfam" id="PF13413">
    <property type="entry name" value="HTH_25"/>
    <property type="match status" value="1"/>
</dbReference>
<dbReference type="Pfam" id="PF13464">
    <property type="entry name" value="RodZ_C"/>
    <property type="match status" value="1"/>
</dbReference>
<dbReference type="SMART" id="SM00530">
    <property type="entry name" value="HTH_XRE"/>
    <property type="match status" value="1"/>
</dbReference>
<dbReference type="SUPFAM" id="SSF47413">
    <property type="entry name" value="lambda repressor-like DNA-binding domains"/>
    <property type="match status" value="1"/>
</dbReference>
<dbReference type="PROSITE" id="PS50943">
    <property type="entry name" value="HTH_CROC1"/>
    <property type="match status" value="1"/>
</dbReference>
<evidence type="ECO:0000255" key="1">
    <source>
        <dbReference type="HAMAP-Rule" id="MF_02017"/>
    </source>
</evidence>
<evidence type="ECO:0000256" key="2">
    <source>
        <dbReference type="SAM" id="MobiDB-lite"/>
    </source>
</evidence>
<feature type="chain" id="PRO_0000361876" description="Cytoskeleton protein RodZ">
    <location>
        <begin position="1"/>
        <end position="363"/>
    </location>
</feature>
<feature type="topological domain" description="Cytoplasmic" evidence="1">
    <location>
        <begin position="1"/>
        <end position="111"/>
    </location>
</feature>
<feature type="transmembrane region" description="Helical; Signal-anchor for type II membrane protein" evidence="1">
    <location>
        <begin position="112"/>
        <end position="132"/>
    </location>
</feature>
<feature type="topological domain" description="Periplasmic" evidence="1">
    <location>
        <begin position="133"/>
        <end position="363"/>
    </location>
</feature>
<feature type="domain" description="HTH cro/C1-type" evidence="1">
    <location>
        <begin position="19"/>
        <end position="79"/>
    </location>
</feature>
<feature type="DNA-binding region" description="H-T-H motif" evidence="1">
    <location>
        <begin position="30"/>
        <end position="49"/>
    </location>
</feature>
<feature type="region of interest" description="Disordered" evidence="2">
    <location>
        <begin position="151"/>
        <end position="277"/>
    </location>
</feature>
<feature type="compositionally biased region" description="Polar residues" evidence="2">
    <location>
        <begin position="188"/>
        <end position="199"/>
    </location>
</feature>
<feature type="compositionally biased region" description="Low complexity" evidence="2">
    <location>
        <begin position="200"/>
        <end position="225"/>
    </location>
</feature>
<feature type="compositionally biased region" description="Polar residues" evidence="2">
    <location>
        <begin position="226"/>
        <end position="243"/>
    </location>
</feature>
<feature type="compositionally biased region" description="Low complexity" evidence="2">
    <location>
        <begin position="247"/>
        <end position="259"/>
    </location>
</feature>
<name>RODZ_YERP3</name>
<proteinExistence type="inferred from homology"/>
<protein>
    <recommendedName>
        <fullName evidence="1">Cytoskeleton protein RodZ</fullName>
    </recommendedName>
</protein>
<comment type="function">
    <text evidence="1">Cytoskeletal protein that is involved in cell-shape control through regulation of the length of the long axis.</text>
</comment>
<comment type="subcellular location">
    <subcellularLocation>
        <location evidence="1">Cell inner membrane</location>
        <topology evidence="1">Single-pass type II membrane protein</topology>
    </subcellularLocation>
    <text evidence="1">Forms helical filaments along the long axis of the cell.</text>
</comment>
<comment type="domain">
    <text evidence="1">The helix-turn-helix (HTH) motif in the cytoplasmic domain of the N-terminus is involved in the formation of spirals to maintain the rigid rod shape. As this protein is anchored in the cytoplasmic membrane, the HTH motif may contribute to protein-protein interactions to form the RodZ helix, which is localized beneath the cytoplasmic membrane. The C-terminal domain may be critical for determination of the rod shape by probably interacting with enzymes required for synthesis of the peptidoglycan layer, including PBPs in the periplasm.</text>
</comment>
<comment type="similarity">
    <text evidence="1">Belongs to the RodZ family.</text>
</comment>
<reference key="1">
    <citation type="journal article" date="2007" name="PLoS Genet.">
        <title>The complete genome sequence of Yersinia pseudotuberculosis IP31758, the causative agent of Far East scarlet-like fever.</title>
        <authorList>
            <person name="Eppinger M."/>
            <person name="Rosovitz M.J."/>
            <person name="Fricke W.F."/>
            <person name="Rasko D.A."/>
            <person name="Kokorina G."/>
            <person name="Fayolle C."/>
            <person name="Lindler L.E."/>
            <person name="Carniel E."/>
            <person name="Ravel J."/>
        </authorList>
    </citation>
    <scope>NUCLEOTIDE SEQUENCE [LARGE SCALE GENOMIC DNA]</scope>
    <source>
        <strain>IP 31758</strain>
    </source>
</reference>
<sequence length="363" mass="38220">MNTEASQDQTVTETPGVRLRQARESLGLTQQTVAERLCLKVSTIRDIEEDNAQANLASTFHRGYIRSYAKLVHLPEDELLPILEKQAPVRAAKVAPMQSFSLGKKHKKRDGWLMSFTWLIVLVVLGLTGAWWWQNHQAQQAEIANMVDQSSAQLSQNGGQPVPLTDDNRDAIAPTDAPAPVANGQPVPLTNHSVSAITNSAPTTSSVPTTSSATTSSVPTTSSVPKINSTEPVDTANTNTTMHQEGAASAAVSPSQVPQPGMPTGQPPLPTADAGVSGSASSVGALVMNFTADCWLQVVDATGKTLFSGIQKGGAVLNLAGKAPYKLTIGAPGALTISYQGNPVDLSKFIKANRVARLTVGVE</sequence>
<keyword id="KW-0997">Cell inner membrane</keyword>
<keyword id="KW-1003">Cell membrane</keyword>
<keyword id="KW-0133">Cell shape</keyword>
<keyword id="KW-0238">DNA-binding</keyword>
<keyword id="KW-0472">Membrane</keyword>
<keyword id="KW-0735">Signal-anchor</keyword>
<keyword id="KW-0812">Transmembrane</keyword>
<keyword id="KW-1133">Transmembrane helix</keyword>